<gene>
    <name evidence="1" type="primary">nqrE</name>
    <name type="ordered locus">AHA_1140</name>
</gene>
<keyword id="KW-0997">Cell inner membrane</keyword>
<keyword id="KW-1003">Cell membrane</keyword>
<keyword id="KW-0406">Ion transport</keyword>
<keyword id="KW-0472">Membrane</keyword>
<keyword id="KW-0520">NAD</keyword>
<keyword id="KW-1185">Reference proteome</keyword>
<keyword id="KW-0915">Sodium</keyword>
<keyword id="KW-0739">Sodium transport</keyword>
<keyword id="KW-1278">Translocase</keyword>
<keyword id="KW-0812">Transmembrane</keyword>
<keyword id="KW-1133">Transmembrane helix</keyword>
<keyword id="KW-0813">Transport</keyword>
<keyword id="KW-0830">Ubiquinone</keyword>
<name>NQRE_AERHH</name>
<proteinExistence type="inferred from homology"/>
<sequence>MEHYISLLIRSIFIENLALSFFLGMCTFLAVSKKVKTAMGLGIAVIVVQTVAVPANNLIYNYVLKDGALVSGLDLSFLSFITFIGVIAALVQILEMALDKYFPALYNALGIFLPLITVNCAIFGGVSFMVQRDYNFVESVVYGVGSGAGWMLAIVAMAGIREKMKYSDVPEGLRGLGITFITAGLMALGFMSFSGISL</sequence>
<dbReference type="EC" id="7.2.1.1" evidence="1"/>
<dbReference type="EMBL" id="CP000462">
    <property type="protein sequence ID" value="ABK36455.1"/>
    <property type="molecule type" value="Genomic_DNA"/>
</dbReference>
<dbReference type="RefSeq" id="WP_005303538.1">
    <property type="nucleotide sequence ID" value="NC_008570.1"/>
</dbReference>
<dbReference type="RefSeq" id="YP_855681.1">
    <property type="nucleotide sequence ID" value="NC_008570.1"/>
</dbReference>
<dbReference type="SMR" id="A0KHD0"/>
<dbReference type="STRING" id="380703.AHA_1140"/>
<dbReference type="EnsemblBacteria" id="ABK36455">
    <property type="protein sequence ID" value="ABK36455"/>
    <property type="gene ID" value="AHA_1140"/>
</dbReference>
<dbReference type="GeneID" id="97856096"/>
<dbReference type="KEGG" id="aha:AHA_1140"/>
<dbReference type="PATRIC" id="fig|380703.7.peg.1145"/>
<dbReference type="eggNOG" id="COG2209">
    <property type="taxonomic scope" value="Bacteria"/>
</dbReference>
<dbReference type="HOGENOM" id="CLU_095255_0_0_6"/>
<dbReference type="OrthoDB" id="9803631at2"/>
<dbReference type="PRO" id="PR:A0KHD0"/>
<dbReference type="Proteomes" id="UP000000756">
    <property type="component" value="Chromosome"/>
</dbReference>
<dbReference type="GO" id="GO:0009276">
    <property type="term" value="C:Gram-negative-bacterium-type cell wall"/>
    <property type="evidence" value="ECO:0007669"/>
    <property type="project" value="InterPro"/>
</dbReference>
<dbReference type="GO" id="GO:0005886">
    <property type="term" value="C:plasma membrane"/>
    <property type="evidence" value="ECO:0007669"/>
    <property type="project" value="UniProtKB-SubCell"/>
</dbReference>
<dbReference type="GO" id="GO:0016655">
    <property type="term" value="F:oxidoreductase activity, acting on NAD(P)H, quinone or similar compound as acceptor"/>
    <property type="evidence" value="ECO:0007669"/>
    <property type="project" value="UniProtKB-UniRule"/>
</dbReference>
<dbReference type="GO" id="GO:0022904">
    <property type="term" value="P:respiratory electron transport chain"/>
    <property type="evidence" value="ECO:0007669"/>
    <property type="project" value="InterPro"/>
</dbReference>
<dbReference type="GO" id="GO:0006814">
    <property type="term" value="P:sodium ion transport"/>
    <property type="evidence" value="ECO:0007669"/>
    <property type="project" value="UniProtKB-UniRule"/>
</dbReference>
<dbReference type="HAMAP" id="MF_00429">
    <property type="entry name" value="NqrE"/>
    <property type="match status" value="1"/>
</dbReference>
<dbReference type="InterPro" id="IPR003667">
    <property type="entry name" value="NqrDE/RnfAE"/>
</dbReference>
<dbReference type="InterPro" id="IPR050133">
    <property type="entry name" value="NqrDE/RnfAE_oxidrdctase"/>
</dbReference>
<dbReference type="InterPro" id="IPR010967">
    <property type="entry name" value="NqrE"/>
</dbReference>
<dbReference type="NCBIfam" id="TIGR01940">
    <property type="entry name" value="nqrE"/>
    <property type="match status" value="1"/>
</dbReference>
<dbReference type="PANTHER" id="PTHR30335">
    <property type="entry name" value="INTEGRAL MEMBRANE PROTEIN OF SOXR-REDUCING COMPLEX"/>
    <property type="match status" value="1"/>
</dbReference>
<dbReference type="PANTHER" id="PTHR30335:SF1">
    <property type="entry name" value="NA(+)-TRANSLOCATING NADH-QUINONE REDUCTASE SUBUNIT E"/>
    <property type="match status" value="1"/>
</dbReference>
<dbReference type="Pfam" id="PF02508">
    <property type="entry name" value="Rnf-Nqr"/>
    <property type="match status" value="1"/>
</dbReference>
<dbReference type="PIRSF" id="PIRSF006102">
    <property type="entry name" value="NQR_DE"/>
    <property type="match status" value="1"/>
</dbReference>
<feature type="chain" id="PRO_1000060184" description="Na(+)-translocating NADH-quinone reductase subunit E">
    <location>
        <begin position="1"/>
        <end position="198"/>
    </location>
</feature>
<feature type="transmembrane region" description="Helical" evidence="1">
    <location>
        <begin position="11"/>
        <end position="31"/>
    </location>
</feature>
<feature type="transmembrane region" description="Helical" evidence="1">
    <location>
        <begin position="39"/>
        <end position="59"/>
    </location>
</feature>
<feature type="transmembrane region" description="Helical" evidence="1">
    <location>
        <begin position="77"/>
        <end position="97"/>
    </location>
</feature>
<feature type="transmembrane region" description="Helical" evidence="1">
    <location>
        <begin position="110"/>
        <end position="130"/>
    </location>
</feature>
<feature type="transmembrane region" description="Helical" evidence="1">
    <location>
        <begin position="140"/>
        <end position="160"/>
    </location>
</feature>
<feature type="transmembrane region" description="Helical" evidence="1">
    <location>
        <begin position="176"/>
        <end position="196"/>
    </location>
</feature>
<organism>
    <name type="scientific">Aeromonas hydrophila subsp. hydrophila (strain ATCC 7966 / DSM 30187 / BCRC 13018 / CCUG 14551 / JCM 1027 / KCTC 2358 / NCIMB 9240 / NCTC 8049)</name>
    <dbReference type="NCBI Taxonomy" id="380703"/>
    <lineage>
        <taxon>Bacteria</taxon>
        <taxon>Pseudomonadati</taxon>
        <taxon>Pseudomonadota</taxon>
        <taxon>Gammaproteobacteria</taxon>
        <taxon>Aeromonadales</taxon>
        <taxon>Aeromonadaceae</taxon>
        <taxon>Aeromonas</taxon>
    </lineage>
</organism>
<comment type="function">
    <text evidence="1">NQR complex catalyzes the reduction of ubiquinone-1 to ubiquinol by two successive reactions, coupled with the transport of Na(+) ions from the cytoplasm to the periplasm. NqrA to NqrE are probably involved in the second step, the conversion of ubisemiquinone to ubiquinol.</text>
</comment>
<comment type="catalytic activity">
    <reaction evidence="1">
        <text>a ubiquinone + n Na(+)(in) + NADH + H(+) = a ubiquinol + n Na(+)(out) + NAD(+)</text>
        <dbReference type="Rhea" id="RHEA:47748"/>
        <dbReference type="Rhea" id="RHEA-COMP:9565"/>
        <dbReference type="Rhea" id="RHEA-COMP:9566"/>
        <dbReference type="ChEBI" id="CHEBI:15378"/>
        <dbReference type="ChEBI" id="CHEBI:16389"/>
        <dbReference type="ChEBI" id="CHEBI:17976"/>
        <dbReference type="ChEBI" id="CHEBI:29101"/>
        <dbReference type="ChEBI" id="CHEBI:57540"/>
        <dbReference type="ChEBI" id="CHEBI:57945"/>
        <dbReference type="EC" id="7.2.1.1"/>
    </reaction>
</comment>
<comment type="subunit">
    <text evidence="1">Composed of six subunits; NqrA, NqrB, NqrC, NqrD, NqrE and NqrF.</text>
</comment>
<comment type="subcellular location">
    <subcellularLocation>
        <location evidence="1">Cell inner membrane</location>
        <topology evidence="1">Multi-pass membrane protein</topology>
    </subcellularLocation>
</comment>
<comment type="similarity">
    <text evidence="1">Belongs to the NqrDE/RnfAE family.</text>
</comment>
<reference key="1">
    <citation type="journal article" date="2006" name="J. Bacteriol.">
        <title>Genome sequence of Aeromonas hydrophila ATCC 7966T: jack of all trades.</title>
        <authorList>
            <person name="Seshadri R."/>
            <person name="Joseph S.W."/>
            <person name="Chopra A.K."/>
            <person name="Sha J."/>
            <person name="Shaw J."/>
            <person name="Graf J."/>
            <person name="Haft D.H."/>
            <person name="Wu M."/>
            <person name="Ren Q."/>
            <person name="Rosovitz M.J."/>
            <person name="Madupu R."/>
            <person name="Tallon L."/>
            <person name="Kim M."/>
            <person name="Jin S."/>
            <person name="Vuong H."/>
            <person name="Stine O.C."/>
            <person name="Ali A."/>
            <person name="Horneman A.J."/>
            <person name="Heidelberg J.F."/>
        </authorList>
    </citation>
    <scope>NUCLEOTIDE SEQUENCE [LARGE SCALE GENOMIC DNA]</scope>
    <source>
        <strain>ATCC 7966 / DSM 30187 / BCRC 13018 / CCUG 14551 / JCM 1027 / KCTC 2358 / NCIMB 9240 / NCTC 8049</strain>
    </source>
</reference>
<evidence type="ECO:0000255" key="1">
    <source>
        <dbReference type="HAMAP-Rule" id="MF_00429"/>
    </source>
</evidence>
<protein>
    <recommendedName>
        <fullName evidence="1">Na(+)-translocating NADH-quinone reductase subunit E</fullName>
        <shortName evidence="1">Na(+)-NQR subunit E</shortName>
        <shortName evidence="1">Na(+)-translocating NQR subunit E</shortName>
        <ecNumber evidence="1">7.2.1.1</ecNumber>
    </recommendedName>
    <alternativeName>
        <fullName evidence="1">NQR complex subunit E</fullName>
    </alternativeName>
    <alternativeName>
        <fullName evidence="1">NQR-1 subunit E</fullName>
    </alternativeName>
</protein>
<accession>A0KHD0</accession>